<comment type="function">
    <text evidence="1">Catalyzes the phosphorylation of D-glycero-D-manno-heptose 7-phosphate at the C-1 position to selectively form D-glycero-beta-D-manno-heptose-1,7-bisphosphate.</text>
</comment>
<comment type="function">
    <text evidence="1">Catalyzes the ADP transfer from ATP to D-glycero-beta-D-manno-heptose 1-phosphate, yielding ADP-D-glycero-beta-D-manno-heptose.</text>
</comment>
<comment type="catalytic activity">
    <reaction evidence="1">
        <text>D-glycero-beta-D-manno-heptose 7-phosphate + ATP = D-glycero-beta-D-manno-heptose 1,7-bisphosphate + ADP + H(+)</text>
        <dbReference type="Rhea" id="RHEA:27473"/>
        <dbReference type="ChEBI" id="CHEBI:15378"/>
        <dbReference type="ChEBI" id="CHEBI:30616"/>
        <dbReference type="ChEBI" id="CHEBI:60204"/>
        <dbReference type="ChEBI" id="CHEBI:60208"/>
        <dbReference type="ChEBI" id="CHEBI:456216"/>
        <dbReference type="EC" id="2.7.1.167"/>
    </reaction>
</comment>
<comment type="catalytic activity">
    <reaction evidence="1">
        <text>D-glycero-beta-D-manno-heptose 1-phosphate + ATP + H(+) = ADP-D-glycero-beta-D-manno-heptose + diphosphate</text>
        <dbReference type="Rhea" id="RHEA:27465"/>
        <dbReference type="ChEBI" id="CHEBI:15378"/>
        <dbReference type="ChEBI" id="CHEBI:30616"/>
        <dbReference type="ChEBI" id="CHEBI:33019"/>
        <dbReference type="ChEBI" id="CHEBI:59967"/>
        <dbReference type="ChEBI" id="CHEBI:61593"/>
        <dbReference type="EC" id="2.7.7.70"/>
    </reaction>
</comment>
<comment type="pathway">
    <text evidence="1">Nucleotide-sugar biosynthesis; ADP-L-glycero-beta-D-manno-heptose biosynthesis; ADP-L-glycero-beta-D-manno-heptose from D-glycero-beta-D-manno-heptose 7-phosphate: step 1/4.</text>
</comment>
<comment type="pathway">
    <text evidence="1">Nucleotide-sugar biosynthesis; ADP-L-glycero-beta-D-manno-heptose biosynthesis; ADP-L-glycero-beta-D-manno-heptose from D-glycero-beta-D-manno-heptose 7-phosphate: step 3/4.</text>
</comment>
<comment type="subunit">
    <text evidence="1">Homodimer.</text>
</comment>
<comment type="similarity">
    <text evidence="1">In the N-terminal section; belongs to the carbohydrate kinase PfkB family.</text>
</comment>
<comment type="similarity">
    <text evidence="1">In the C-terminal section; belongs to the cytidylyltransferase family.</text>
</comment>
<organism>
    <name type="scientific">Blochmanniella pennsylvanica (strain BPEN)</name>
    <dbReference type="NCBI Taxonomy" id="291272"/>
    <lineage>
        <taxon>Bacteria</taxon>
        <taxon>Pseudomonadati</taxon>
        <taxon>Pseudomonadota</taxon>
        <taxon>Gammaproteobacteria</taxon>
        <taxon>Enterobacterales</taxon>
        <taxon>Enterobacteriaceae</taxon>
        <taxon>ant endosymbionts</taxon>
        <taxon>Candidatus Blochmanniella</taxon>
    </lineage>
</organism>
<protein>
    <recommendedName>
        <fullName evidence="1">Bifunctional protein HldE</fullName>
    </recommendedName>
    <domain>
        <recommendedName>
            <fullName evidence="1">D-beta-D-heptose 7-phosphate kinase</fullName>
            <ecNumber evidence="1">2.7.1.167</ecNumber>
        </recommendedName>
        <alternativeName>
            <fullName evidence="1">D-beta-D-heptose 7-phosphotransferase</fullName>
        </alternativeName>
        <alternativeName>
            <fullName evidence="1">D-glycero-beta-D-manno-heptose-7-phosphate kinase</fullName>
        </alternativeName>
    </domain>
    <domain>
        <recommendedName>
            <fullName evidence="1">D-beta-D-heptose 1-phosphate adenylyltransferase</fullName>
            <ecNumber evidence="1">2.7.7.70</ecNumber>
        </recommendedName>
        <alternativeName>
            <fullName evidence="1">D-glycero-beta-D-manno-heptose 1-phosphate adenylyltransferase</fullName>
        </alternativeName>
    </domain>
</protein>
<reference key="1">
    <citation type="journal article" date="2005" name="Genome Res.">
        <title>Genome sequence of Blochmannia pennsylvanicus indicates parallel evolutionary trends among bacterial mutualists of insects.</title>
        <authorList>
            <person name="Degnan P.H."/>
            <person name="Lazarus A.B."/>
            <person name="Wernegreen J.J."/>
        </authorList>
    </citation>
    <scope>NUCLEOTIDE SEQUENCE [LARGE SCALE GENOMIC DNA]</scope>
    <source>
        <strain>BPEN</strain>
    </source>
</reference>
<sequence>MTVIFPNFSKSSVLIVGDVMLDRYWYGPTDKIAPEAPVPIVKVNKIIDRPGGAANVAMNIASLGARSRLLGLTGVDEAAKILKKQLNESNIKWNFISVRTCPTIIKLRVMSRNQQLIRLDFEQYFNNVDTTKLLKQVELYLPKYKVLVLSDYAKGSLNCIEEIIKLARYMNVPVIVDPKGIQFSRYKGATLLTPNISEFESIVGSCRNEKILINRAQEIIIDYNLSALLITRSERGMTLCTRYAAPLYFSTQKKKVYHVTGAGDTVVGVLSAALSSGKSLEKACFLANLAASAVIKKSGTSTSNVTEMKNIMNSHICTTLPVGILDEKTLKQTISVVRNRGEKIVMTNGVFDILHSGHVSYLTNAKKLGDRLIVAVNSDGSTRRLKGKTRPINTLEQRMFILAALTVVDWVVPFYEDTPSRLVAYLSPDFLVKGGDYHVCDIEGSQGVLNRGGTVRVLNFQTGCSSSNIINAIKRKN</sequence>
<name>HLDE_BLOPB</name>
<proteinExistence type="inferred from homology"/>
<evidence type="ECO:0000255" key="1">
    <source>
        <dbReference type="HAMAP-Rule" id="MF_01603"/>
    </source>
</evidence>
<feature type="chain" id="PRO_0000255753" description="Bifunctional protein HldE">
    <location>
        <begin position="1"/>
        <end position="477"/>
    </location>
</feature>
<feature type="region of interest" description="Ribokinase">
    <location>
        <begin position="1"/>
        <end position="319"/>
    </location>
</feature>
<feature type="region of interest" description="Cytidylyltransferase">
    <location>
        <begin position="346"/>
        <end position="477"/>
    </location>
</feature>
<feature type="active site" evidence="1">
    <location>
        <position position="264"/>
    </location>
</feature>
<feature type="binding site" evidence="1">
    <location>
        <begin position="195"/>
        <end position="198"/>
    </location>
    <ligand>
        <name>ATP</name>
        <dbReference type="ChEBI" id="CHEBI:30616"/>
    </ligand>
</feature>
<gene>
    <name evidence="1" type="primary">hldE</name>
    <name type="ordered locus">BPEN_065</name>
</gene>
<dbReference type="EC" id="2.7.1.167" evidence="1"/>
<dbReference type="EC" id="2.7.7.70" evidence="1"/>
<dbReference type="EMBL" id="CP000016">
    <property type="protein sequence ID" value="AAZ40711.1"/>
    <property type="molecule type" value="Genomic_DNA"/>
</dbReference>
<dbReference type="RefSeq" id="WP_011282617.1">
    <property type="nucleotide sequence ID" value="NC_007292.1"/>
</dbReference>
<dbReference type="SMR" id="Q493X3"/>
<dbReference type="STRING" id="291272.BPEN_065"/>
<dbReference type="KEGG" id="bpn:BPEN_065"/>
<dbReference type="eggNOG" id="COG0615">
    <property type="taxonomic scope" value="Bacteria"/>
</dbReference>
<dbReference type="eggNOG" id="COG2870">
    <property type="taxonomic scope" value="Bacteria"/>
</dbReference>
<dbReference type="HOGENOM" id="CLU_021150_2_1_6"/>
<dbReference type="OrthoDB" id="9802794at2"/>
<dbReference type="UniPathway" id="UPA00356">
    <property type="reaction ID" value="UER00437"/>
</dbReference>
<dbReference type="UniPathway" id="UPA00356">
    <property type="reaction ID" value="UER00439"/>
</dbReference>
<dbReference type="Proteomes" id="UP000007794">
    <property type="component" value="Chromosome"/>
</dbReference>
<dbReference type="GO" id="GO:0005829">
    <property type="term" value="C:cytosol"/>
    <property type="evidence" value="ECO:0007669"/>
    <property type="project" value="TreeGrafter"/>
</dbReference>
<dbReference type="GO" id="GO:0005524">
    <property type="term" value="F:ATP binding"/>
    <property type="evidence" value="ECO:0007669"/>
    <property type="project" value="UniProtKB-UniRule"/>
</dbReference>
<dbReference type="GO" id="GO:0033785">
    <property type="term" value="F:heptose 7-phosphate kinase activity"/>
    <property type="evidence" value="ECO:0007669"/>
    <property type="project" value="UniProtKB-UniRule"/>
</dbReference>
<dbReference type="GO" id="GO:0033786">
    <property type="term" value="F:heptose-1-phosphate adenylyltransferase activity"/>
    <property type="evidence" value="ECO:0007669"/>
    <property type="project" value="UniProtKB-UniRule"/>
</dbReference>
<dbReference type="GO" id="GO:0016773">
    <property type="term" value="F:phosphotransferase activity, alcohol group as acceptor"/>
    <property type="evidence" value="ECO:0007669"/>
    <property type="project" value="InterPro"/>
</dbReference>
<dbReference type="GO" id="GO:0097171">
    <property type="term" value="P:ADP-L-glycero-beta-D-manno-heptose biosynthetic process"/>
    <property type="evidence" value="ECO:0007669"/>
    <property type="project" value="UniProtKB-UniPathway"/>
</dbReference>
<dbReference type="CDD" id="cd01172">
    <property type="entry name" value="RfaE_like"/>
    <property type="match status" value="1"/>
</dbReference>
<dbReference type="FunFam" id="3.40.1190.20:FF:000002">
    <property type="entry name" value="Bifunctional protein HldE"/>
    <property type="match status" value="1"/>
</dbReference>
<dbReference type="FunFam" id="3.40.50.620:FF:000028">
    <property type="entry name" value="Bifunctional protein HldE"/>
    <property type="match status" value="1"/>
</dbReference>
<dbReference type="Gene3D" id="3.40.1190.20">
    <property type="match status" value="1"/>
</dbReference>
<dbReference type="Gene3D" id="3.40.50.620">
    <property type="entry name" value="HUPs"/>
    <property type="match status" value="1"/>
</dbReference>
<dbReference type="HAMAP" id="MF_01603">
    <property type="entry name" value="HldE"/>
    <property type="match status" value="1"/>
</dbReference>
<dbReference type="InterPro" id="IPR023030">
    <property type="entry name" value="Bifunc_HldE"/>
</dbReference>
<dbReference type="InterPro" id="IPR002173">
    <property type="entry name" value="Carboh/pur_kinase_PfkB_CS"/>
</dbReference>
<dbReference type="InterPro" id="IPR004821">
    <property type="entry name" value="Cyt_trans-like"/>
</dbReference>
<dbReference type="InterPro" id="IPR011611">
    <property type="entry name" value="PfkB_dom"/>
</dbReference>
<dbReference type="InterPro" id="IPR011913">
    <property type="entry name" value="RfaE_dom_I"/>
</dbReference>
<dbReference type="InterPro" id="IPR011914">
    <property type="entry name" value="RfaE_dom_II"/>
</dbReference>
<dbReference type="InterPro" id="IPR029056">
    <property type="entry name" value="Ribokinase-like"/>
</dbReference>
<dbReference type="InterPro" id="IPR014729">
    <property type="entry name" value="Rossmann-like_a/b/a_fold"/>
</dbReference>
<dbReference type="NCBIfam" id="TIGR00125">
    <property type="entry name" value="cyt_tran_rel"/>
    <property type="match status" value="1"/>
</dbReference>
<dbReference type="NCBIfam" id="NF008454">
    <property type="entry name" value="PRK11316.1"/>
    <property type="match status" value="1"/>
</dbReference>
<dbReference type="NCBIfam" id="TIGR02198">
    <property type="entry name" value="rfaE_dom_I"/>
    <property type="match status" value="1"/>
</dbReference>
<dbReference type="NCBIfam" id="TIGR02199">
    <property type="entry name" value="rfaE_dom_II"/>
    <property type="match status" value="1"/>
</dbReference>
<dbReference type="PANTHER" id="PTHR46969">
    <property type="entry name" value="BIFUNCTIONAL PROTEIN HLDE"/>
    <property type="match status" value="1"/>
</dbReference>
<dbReference type="PANTHER" id="PTHR46969:SF1">
    <property type="entry name" value="BIFUNCTIONAL PROTEIN HLDE"/>
    <property type="match status" value="1"/>
</dbReference>
<dbReference type="Pfam" id="PF01467">
    <property type="entry name" value="CTP_transf_like"/>
    <property type="match status" value="1"/>
</dbReference>
<dbReference type="Pfam" id="PF00294">
    <property type="entry name" value="PfkB"/>
    <property type="match status" value="1"/>
</dbReference>
<dbReference type="SUPFAM" id="SSF52374">
    <property type="entry name" value="Nucleotidylyl transferase"/>
    <property type="match status" value="1"/>
</dbReference>
<dbReference type="SUPFAM" id="SSF53613">
    <property type="entry name" value="Ribokinase-like"/>
    <property type="match status" value="1"/>
</dbReference>
<dbReference type="PROSITE" id="PS00583">
    <property type="entry name" value="PFKB_KINASES_1"/>
    <property type="match status" value="1"/>
</dbReference>
<accession>Q493X3</accession>
<keyword id="KW-0067">ATP-binding</keyword>
<keyword id="KW-0119">Carbohydrate metabolism</keyword>
<keyword id="KW-0418">Kinase</keyword>
<keyword id="KW-0511">Multifunctional enzyme</keyword>
<keyword id="KW-0547">Nucleotide-binding</keyword>
<keyword id="KW-0548">Nucleotidyltransferase</keyword>
<keyword id="KW-1185">Reference proteome</keyword>
<keyword id="KW-0808">Transferase</keyword>